<reference key="1">
    <citation type="journal article" date="1990" name="Brain Res. Mol. Brain Res.">
        <title>Chicken growth-associated protein (GAP)-43: primary structure and regulated expression of mRNA during embryogenesis.</title>
        <authorList>
            <person name="Baizer L."/>
            <person name="Alkan S."/>
            <person name="Stocker K."/>
            <person name="Ciment G."/>
        </authorList>
    </citation>
    <scope>NUCLEOTIDE SEQUENCE [MRNA]</scope>
    <scope>DEVELOPMENTAL STAGE</scope>
</reference>
<reference key="2">
    <citation type="journal article" date="1998" name="J. Cell Biol.">
        <title>Paralemmin, a prenyl-palmitoyl-anchored phosphoprotein abundant in neurons and implicated in plasma membrane dynamics and cell process formation.</title>
        <authorList>
            <person name="Kutzleb C."/>
            <person name="Sanders G."/>
            <person name="Yamamoto R."/>
            <person name="Wang X."/>
            <person name="Lichte B."/>
            <person name="Petrasch-Parwez E."/>
            <person name="Kilimann M.W."/>
        </authorList>
    </citation>
    <scope>SUBCELLULAR LOCATION</scope>
    <scope>TISSUE SPECIFICITY</scope>
    <scope>PALMITOYLATION</scope>
</reference>
<comment type="function">
    <text evidence="3">This protein is associated with nerve growth. It is a major component of the motile 'growth cones' that form the tips of elongating axons. Plays a role in axonal and dendritic filopodia induction (By similarity).</text>
</comment>
<comment type="subunit">
    <text evidence="1">Binds calmodulin with a greater affinity in the absence of Ca(2+) than in its presence.</text>
</comment>
<comment type="subcellular location">
    <subcellularLocation>
        <location evidence="7">Cell membrane</location>
        <topology evidence="3">Peripheral membrane protein</topology>
        <orientation evidence="3">Cytoplasmic side</orientation>
    </subcellularLocation>
    <subcellularLocation>
        <location evidence="3">Cell projection</location>
        <location evidence="3">Growth cone membrane</location>
        <topology evidence="3">Peripheral membrane protein</topology>
        <orientation evidence="3">Cytoplasmic side</orientation>
    </subcellularLocation>
    <subcellularLocation>
        <location evidence="7">Synapse</location>
    </subcellularLocation>
    <subcellularLocation>
        <location evidence="7">Cell projection</location>
        <location evidence="7">Filopodium membrane</location>
        <topology evidence="3">Peripheral membrane protein</topology>
    </subcellularLocation>
</comment>
<comment type="tissue specificity">
    <text evidence="7">Expressed in neurons.</text>
</comment>
<comment type="developmental stage">
    <text evidence="6">First expressed in the body and head at embryonic stage 3 dpc (PubMed:2153895). Expressed in the mid-thoracic region of embryos and also in the spinal cord, dorsal root and sympathetic ganglia at embryonic stage 10 dpc (PubMed:2153895). Highly expressed in the brain at embryonic stage 13 dpc (PubMed:2153895). Expressed at low levels in the gut at embryonic stage 16 dpc (PubMed:2153895). Not expressed in heart, skeletal muscle or liver at embryonic stage 16 dpc (PubMed:2153895).</text>
</comment>
<comment type="PTM">
    <text evidence="7">Palmitoylated (PubMed:9813098). Palmitoylation is essential for plasma membrane association (PubMed:9813098).</text>
</comment>
<comment type="similarity">
    <text evidence="8">Belongs to the neuromodulin family.</text>
</comment>
<proteinExistence type="evidence at protein level"/>
<organism>
    <name type="scientific">Gallus gallus</name>
    <name type="common">Chicken</name>
    <dbReference type="NCBI Taxonomy" id="9031"/>
    <lineage>
        <taxon>Eukaryota</taxon>
        <taxon>Metazoa</taxon>
        <taxon>Chordata</taxon>
        <taxon>Craniata</taxon>
        <taxon>Vertebrata</taxon>
        <taxon>Euteleostomi</taxon>
        <taxon>Archelosauria</taxon>
        <taxon>Archosauria</taxon>
        <taxon>Dinosauria</taxon>
        <taxon>Saurischia</taxon>
        <taxon>Theropoda</taxon>
        <taxon>Coelurosauria</taxon>
        <taxon>Aves</taxon>
        <taxon>Neognathae</taxon>
        <taxon>Galloanserae</taxon>
        <taxon>Galliformes</taxon>
        <taxon>Phasianidae</taxon>
        <taxon>Phasianinae</taxon>
        <taxon>Gallus</taxon>
    </lineage>
</organism>
<evidence type="ECO:0000250" key="1"/>
<evidence type="ECO:0000250" key="2">
    <source>
        <dbReference type="UniProtKB" id="P06837"/>
    </source>
</evidence>
<evidence type="ECO:0000250" key="3">
    <source>
        <dbReference type="UniProtKB" id="P17677"/>
    </source>
</evidence>
<evidence type="ECO:0000255" key="4">
    <source>
        <dbReference type="PROSITE-ProRule" id="PRU00116"/>
    </source>
</evidence>
<evidence type="ECO:0000256" key="5">
    <source>
        <dbReference type="SAM" id="MobiDB-lite"/>
    </source>
</evidence>
<evidence type="ECO:0000269" key="6">
    <source>
    </source>
</evidence>
<evidence type="ECO:0000269" key="7">
    <source>
    </source>
</evidence>
<evidence type="ECO:0000305" key="8"/>
<name>NEUM_CHICK</name>
<feature type="chain" id="PRO_0000159600" description="Neuromodulin">
    <location>
        <begin position="1"/>
        <end position="246"/>
    </location>
</feature>
<feature type="domain" description="IQ" evidence="4">
    <location>
        <begin position="32"/>
        <end position="61"/>
    </location>
</feature>
<feature type="region of interest" description="Disordered" evidence="5">
    <location>
        <begin position="1"/>
        <end position="246"/>
    </location>
</feature>
<feature type="compositionally biased region" description="Basic and acidic residues" evidence="5">
    <location>
        <begin position="9"/>
        <end position="33"/>
    </location>
</feature>
<feature type="compositionally biased region" description="Low complexity" evidence="5">
    <location>
        <begin position="87"/>
        <end position="99"/>
    </location>
</feature>
<feature type="compositionally biased region" description="Low complexity" evidence="5">
    <location>
        <begin position="125"/>
        <end position="157"/>
    </location>
</feature>
<feature type="compositionally biased region" description="Basic and acidic residues" evidence="5">
    <location>
        <begin position="164"/>
        <end position="176"/>
    </location>
</feature>
<feature type="compositionally biased region" description="Low complexity" evidence="5">
    <location>
        <begin position="177"/>
        <end position="203"/>
    </location>
</feature>
<feature type="compositionally biased region" description="Basic and acidic residues" evidence="5">
    <location>
        <begin position="213"/>
        <end position="225"/>
    </location>
</feature>
<feature type="compositionally biased region" description="Basic and acidic residues" evidence="5">
    <location>
        <begin position="237"/>
        <end position="246"/>
    </location>
</feature>
<feature type="lipid moiety-binding region" description="S-palmitoyl cysteine" evidence="2">
    <location>
        <position position="3"/>
    </location>
</feature>
<feature type="lipid moiety-binding region" description="S-palmitoyl cysteine" evidence="2">
    <location>
        <position position="4"/>
    </location>
</feature>
<sequence length="246" mass="25631">MLCCMRRTKQVEKNEDGDQKIEQDGIKPEDKAHKAATKIQASFRGHITRKKLKGEKKADAPASESEAADKKDEGPAGGAAENKESEASAATEASAADSAQLDEGSKDSSVPAEEKKGNGAADTGSEQPAPQAATPAASSEEKPAAAAETESATKASTDNSPSLKADEAQDKEEPKQADVPAADTTATTTPAAEDATAKATAQPQMETVESSQTEEKTDAVEETKPTESAQQEEVKEEESKADQENA</sequence>
<dbReference type="PIR" id="A60049">
    <property type="entry name" value="A60049"/>
</dbReference>
<dbReference type="RefSeq" id="NP_001291983.1">
    <property type="nucleotide sequence ID" value="NM_001305054.1"/>
</dbReference>
<dbReference type="SMR" id="P35001"/>
<dbReference type="FunCoup" id="P35001">
    <property type="interactions" value="20"/>
</dbReference>
<dbReference type="STRING" id="9031.ENSGALP00000043662"/>
<dbReference type="GlyGen" id="P35001">
    <property type="glycosylation" value="1 site"/>
</dbReference>
<dbReference type="GeneID" id="427955"/>
<dbReference type="KEGG" id="gga:427955"/>
<dbReference type="CTD" id="2596"/>
<dbReference type="VEuPathDB" id="HostDB:geneid_427955"/>
<dbReference type="eggNOG" id="ENOG502RXWF">
    <property type="taxonomic scope" value="Eukaryota"/>
</dbReference>
<dbReference type="InParanoid" id="P35001"/>
<dbReference type="OrthoDB" id="9397439at2759"/>
<dbReference type="PhylomeDB" id="P35001"/>
<dbReference type="PRO" id="PR:P35001"/>
<dbReference type="Proteomes" id="UP000000539">
    <property type="component" value="Unassembled WGS sequence"/>
</dbReference>
<dbReference type="GO" id="GO:0005737">
    <property type="term" value="C:cytoplasm"/>
    <property type="evidence" value="ECO:0000318"/>
    <property type="project" value="GO_Central"/>
</dbReference>
<dbReference type="GO" id="GO:0005829">
    <property type="term" value="C:cytosol"/>
    <property type="evidence" value="ECO:0000314"/>
    <property type="project" value="AgBase"/>
</dbReference>
<dbReference type="GO" id="GO:0031527">
    <property type="term" value="C:filopodium membrane"/>
    <property type="evidence" value="ECO:0007669"/>
    <property type="project" value="UniProtKB-SubCell"/>
</dbReference>
<dbReference type="GO" id="GO:0032584">
    <property type="term" value="C:growth cone membrane"/>
    <property type="evidence" value="ECO:0007669"/>
    <property type="project" value="UniProtKB-SubCell"/>
</dbReference>
<dbReference type="GO" id="GO:0044306">
    <property type="term" value="C:neuron projection terminus"/>
    <property type="evidence" value="ECO:0000314"/>
    <property type="project" value="AgBase"/>
</dbReference>
<dbReference type="GO" id="GO:0005886">
    <property type="term" value="C:plasma membrane"/>
    <property type="evidence" value="ECO:0000318"/>
    <property type="project" value="GO_Central"/>
</dbReference>
<dbReference type="GO" id="GO:0014069">
    <property type="term" value="C:postsynaptic density"/>
    <property type="evidence" value="ECO:0000318"/>
    <property type="project" value="GO_Central"/>
</dbReference>
<dbReference type="GO" id="GO:0097060">
    <property type="term" value="C:synaptic membrane"/>
    <property type="evidence" value="ECO:0000314"/>
    <property type="project" value="AgBase"/>
</dbReference>
<dbReference type="GO" id="GO:0005516">
    <property type="term" value="F:calmodulin binding"/>
    <property type="evidence" value="ECO:0000318"/>
    <property type="project" value="GO_Central"/>
</dbReference>
<dbReference type="GO" id="GO:0035727">
    <property type="term" value="F:lysophosphatidic acid binding"/>
    <property type="evidence" value="ECO:0000318"/>
    <property type="project" value="GO_Central"/>
</dbReference>
<dbReference type="GO" id="GO:1901981">
    <property type="term" value="F:phosphatidylinositol phosphate binding"/>
    <property type="evidence" value="ECO:0000318"/>
    <property type="project" value="GO_Central"/>
</dbReference>
<dbReference type="GO" id="GO:0001786">
    <property type="term" value="F:phosphatidylserine binding"/>
    <property type="evidence" value="ECO:0000318"/>
    <property type="project" value="GO_Central"/>
</dbReference>
<dbReference type="GO" id="GO:0016198">
    <property type="term" value="P:axon choice point recognition"/>
    <property type="evidence" value="ECO:0000318"/>
    <property type="project" value="GO_Central"/>
</dbReference>
<dbReference type="GO" id="GO:0031103">
    <property type="term" value="P:axon regeneration"/>
    <property type="evidence" value="ECO:0000318"/>
    <property type="project" value="GO_Central"/>
</dbReference>
<dbReference type="GO" id="GO:0040008">
    <property type="term" value="P:regulation of growth"/>
    <property type="evidence" value="ECO:0007669"/>
    <property type="project" value="InterPro"/>
</dbReference>
<dbReference type="GO" id="GO:0042246">
    <property type="term" value="P:tissue regeneration"/>
    <property type="evidence" value="ECO:0000318"/>
    <property type="project" value="GO_Central"/>
</dbReference>
<dbReference type="CDD" id="cd23767">
    <property type="entry name" value="IQCD"/>
    <property type="match status" value="1"/>
</dbReference>
<dbReference type="FunFam" id="1.20.5.190:FF:000125">
    <property type="match status" value="1"/>
</dbReference>
<dbReference type="Gene3D" id="1.20.5.190">
    <property type="match status" value="1"/>
</dbReference>
<dbReference type="InterPro" id="IPR000048">
    <property type="entry name" value="IQ_motif_EF-hand-BS"/>
</dbReference>
<dbReference type="InterPro" id="IPR001422">
    <property type="entry name" value="Neuromodulin"/>
</dbReference>
<dbReference type="InterPro" id="IPR017454">
    <property type="entry name" value="Neuromodulin_C"/>
</dbReference>
<dbReference type="InterPro" id="IPR018947">
    <property type="entry name" value="Neuromodulin_gap-junction_N"/>
</dbReference>
<dbReference type="InterPro" id="IPR033137">
    <property type="entry name" value="Neuromodulin_P_site"/>
</dbReference>
<dbReference type="InterPro" id="IPR018243">
    <property type="entry name" value="Neuromodulin_palmitoyl_site"/>
</dbReference>
<dbReference type="PANTHER" id="PTHR10699">
    <property type="entry name" value="NEUROMODULIN"/>
    <property type="match status" value="1"/>
</dbReference>
<dbReference type="PANTHER" id="PTHR10699:SF15">
    <property type="entry name" value="NEUROMODULIN"/>
    <property type="match status" value="1"/>
</dbReference>
<dbReference type="Pfam" id="PF00612">
    <property type="entry name" value="IQ"/>
    <property type="match status" value="1"/>
</dbReference>
<dbReference type="Pfam" id="PF06614">
    <property type="entry name" value="Neuromodulin"/>
    <property type="match status" value="1"/>
</dbReference>
<dbReference type="Pfam" id="PF10580">
    <property type="entry name" value="Neuromodulin_N"/>
    <property type="match status" value="1"/>
</dbReference>
<dbReference type="PRINTS" id="PR00215">
    <property type="entry name" value="NEUROMODULIN"/>
</dbReference>
<dbReference type="SMART" id="SM00015">
    <property type="entry name" value="IQ"/>
    <property type="match status" value="1"/>
</dbReference>
<dbReference type="PROSITE" id="PS50096">
    <property type="entry name" value="IQ"/>
    <property type="match status" value="1"/>
</dbReference>
<dbReference type="PROSITE" id="PS00412">
    <property type="entry name" value="NEUROMODULIN_1"/>
    <property type="match status" value="1"/>
</dbReference>
<dbReference type="PROSITE" id="PS00413">
    <property type="entry name" value="NEUROMODULIN_2"/>
    <property type="match status" value="1"/>
</dbReference>
<keyword id="KW-0112">Calmodulin-binding</keyword>
<keyword id="KW-1003">Cell membrane</keyword>
<keyword id="KW-0966">Cell projection</keyword>
<keyword id="KW-0217">Developmental protein</keyword>
<keyword id="KW-0221">Differentiation</keyword>
<keyword id="KW-0341">Growth regulation</keyword>
<keyword id="KW-0449">Lipoprotein</keyword>
<keyword id="KW-0472">Membrane</keyword>
<keyword id="KW-0524">Neurogenesis</keyword>
<keyword id="KW-0564">Palmitate</keyword>
<keyword id="KW-0597">Phosphoprotein</keyword>
<keyword id="KW-1185">Reference proteome</keyword>
<keyword id="KW-0770">Synapse</keyword>
<accession>P35001</accession>
<gene>
    <name type="primary">GAP43</name>
</gene>
<protein>
    <recommendedName>
        <fullName>Neuromodulin</fullName>
    </recommendedName>
    <alternativeName>
        <fullName>Axonal membrane protein GAP-43</fullName>
    </alternativeName>
    <alternativeName>
        <fullName>Growth-associated protein 43</fullName>
    </alternativeName>
</protein>